<keyword id="KW-0408">Iron</keyword>
<gene>
    <name type="ordered locus">VP2627</name>
</gene>
<dbReference type="EMBL" id="BA000031">
    <property type="protein sequence ID" value="BAC60890.1"/>
    <property type="molecule type" value="Genomic_DNA"/>
</dbReference>
<dbReference type="RefSeq" id="NP_799006.1">
    <property type="nucleotide sequence ID" value="NC_004603.1"/>
</dbReference>
<dbReference type="RefSeq" id="WP_005482430.1">
    <property type="nucleotide sequence ID" value="NC_004603.1"/>
</dbReference>
<dbReference type="SMR" id="Q87LI5"/>
<dbReference type="GeneID" id="1190151"/>
<dbReference type="KEGG" id="vpa:VP2627"/>
<dbReference type="PATRIC" id="fig|223926.6.peg.2523"/>
<dbReference type="eggNOG" id="COG2924">
    <property type="taxonomic scope" value="Bacteria"/>
</dbReference>
<dbReference type="HOGENOM" id="CLU_170994_0_0_6"/>
<dbReference type="Proteomes" id="UP000002493">
    <property type="component" value="Chromosome 1"/>
</dbReference>
<dbReference type="GO" id="GO:0005829">
    <property type="term" value="C:cytosol"/>
    <property type="evidence" value="ECO:0007669"/>
    <property type="project" value="TreeGrafter"/>
</dbReference>
<dbReference type="GO" id="GO:0005506">
    <property type="term" value="F:iron ion binding"/>
    <property type="evidence" value="ECO:0007669"/>
    <property type="project" value="UniProtKB-UniRule"/>
</dbReference>
<dbReference type="GO" id="GO:0034599">
    <property type="term" value="P:cellular response to oxidative stress"/>
    <property type="evidence" value="ECO:0007669"/>
    <property type="project" value="TreeGrafter"/>
</dbReference>
<dbReference type="FunFam" id="1.10.3880.10:FF:000001">
    <property type="entry name" value="Probable Fe(2+)-trafficking protein"/>
    <property type="match status" value="1"/>
</dbReference>
<dbReference type="Gene3D" id="1.10.3880.10">
    <property type="entry name" value="Fe(II) trafficking protein YggX"/>
    <property type="match status" value="1"/>
</dbReference>
<dbReference type="HAMAP" id="MF_00686">
    <property type="entry name" value="Fe_traffic_YggX"/>
    <property type="match status" value="1"/>
</dbReference>
<dbReference type="InterPro" id="IPR007457">
    <property type="entry name" value="Fe_traffick_prot_YggX"/>
</dbReference>
<dbReference type="InterPro" id="IPR036766">
    <property type="entry name" value="Fe_traffick_prot_YggX_sf"/>
</dbReference>
<dbReference type="NCBIfam" id="NF003817">
    <property type="entry name" value="PRK05408.1"/>
    <property type="match status" value="1"/>
</dbReference>
<dbReference type="PANTHER" id="PTHR36965">
    <property type="entry name" value="FE(2+)-TRAFFICKING PROTEIN-RELATED"/>
    <property type="match status" value="1"/>
</dbReference>
<dbReference type="PANTHER" id="PTHR36965:SF1">
    <property type="entry name" value="FE(2+)-TRAFFICKING PROTEIN-RELATED"/>
    <property type="match status" value="1"/>
</dbReference>
<dbReference type="Pfam" id="PF04362">
    <property type="entry name" value="Iron_traffic"/>
    <property type="match status" value="1"/>
</dbReference>
<dbReference type="PIRSF" id="PIRSF029827">
    <property type="entry name" value="Fe_traffic_YggX"/>
    <property type="match status" value="1"/>
</dbReference>
<dbReference type="SUPFAM" id="SSF111148">
    <property type="entry name" value="YggX-like"/>
    <property type="match status" value="1"/>
</dbReference>
<proteinExistence type="inferred from homology"/>
<feature type="chain" id="PRO_0000214510" description="Probable Fe(2+)-trafficking protein">
    <location>
        <begin position="1"/>
        <end position="90"/>
    </location>
</feature>
<protein>
    <recommendedName>
        <fullName evidence="1">Probable Fe(2+)-trafficking protein</fullName>
    </recommendedName>
</protein>
<organism>
    <name type="scientific">Vibrio parahaemolyticus serotype O3:K6 (strain RIMD 2210633)</name>
    <dbReference type="NCBI Taxonomy" id="223926"/>
    <lineage>
        <taxon>Bacteria</taxon>
        <taxon>Pseudomonadati</taxon>
        <taxon>Pseudomonadota</taxon>
        <taxon>Gammaproteobacteria</taxon>
        <taxon>Vibrionales</taxon>
        <taxon>Vibrionaceae</taxon>
        <taxon>Vibrio</taxon>
    </lineage>
</organism>
<evidence type="ECO:0000255" key="1">
    <source>
        <dbReference type="HAMAP-Rule" id="MF_00686"/>
    </source>
</evidence>
<comment type="function">
    <text evidence="1">Could be a mediator in iron transactions between iron acquisition and iron-requiring processes, such as synthesis and/or repair of Fe-S clusters in biosynthetic enzymes.</text>
</comment>
<comment type="similarity">
    <text evidence="1">Belongs to the Fe(2+)-trafficking protein family.</text>
</comment>
<accession>Q87LI5</accession>
<sequence>MSRTVFCARLKKEGEGLDFQLYPGELGKRIFDNISKEAWAQWQHKQTMLINEKKLNMMDPEHRKLLETEMVNFLFEGKDVHIEGYTPPSE</sequence>
<name>FETP_VIBPA</name>
<reference key="1">
    <citation type="journal article" date="2003" name="Lancet">
        <title>Genome sequence of Vibrio parahaemolyticus: a pathogenic mechanism distinct from that of V. cholerae.</title>
        <authorList>
            <person name="Makino K."/>
            <person name="Oshima K."/>
            <person name="Kurokawa K."/>
            <person name="Yokoyama K."/>
            <person name="Uda T."/>
            <person name="Tagomori K."/>
            <person name="Iijima Y."/>
            <person name="Najima M."/>
            <person name="Nakano M."/>
            <person name="Yamashita A."/>
            <person name="Kubota Y."/>
            <person name="Kimura S."/>
            <person name="Yasunaga T."/>
            <person name="Honda T."/>
            <person name="Shinagawa H."/>
            <person name="Hattori M."/>
            <person name="Iida T."/>
        </authorList>
    </citation>
    <scope>NUCLEOTIDE SEQUENCE [LARGE SCALE GENOMIC DNA]</scope>
    <source>
        <strain>RIMD 2210633</strain>
    </source>
</reference>